<name>IFN14_HUMAN</name>
<accession>P01570</accession>
<accession>Q5VZ56</accession>
<accession>Q7M4S1</accession>
<comment type="function">
    <text evidence="2">Produced by macrophages, IFN-alpha have antiviral activities. Interferon stimulates the production of two enzymes: a protein kinase and an oligoadenylate synthetase.</text>
</comment>
<comment type="interaction">
    <interactant intactId="EBI-12290903">
        <id>P01570</id>
    </interactant>
    <interactant intactId="EBI-16439278">
        <id>Q6FHY5</id>
        <label>MEOX2</label>
    </interactant>
    <organismsDiffer>false</organismsDiffer>
    <experiments>3</experiments>
</comment>
<comment type="subcellular location">
    <subcellularLocation>
        <location>Secreted</location>
    </subcellularLocation>
</comment>
<comment type="similarity">
    <text evidence="5">Belongs to the alpha/beta interferon family.</text>
</comment>
<protein>
    <recommendedName>
        <fullName>Interferon alpha-14</fullName>
        <shortName>IFN-alpha-14</shortName>
    </recommendedName>
    <alternativeName>
        <fullName>Interferon alpha-H</fullName>
        <shortName>LeIF H</shortName>
    </alternativeName>
    <alternativeName>
        <fullName>Interferon lambda-2-H</fullName>
    </alternativeName>
</protein>
<reference key="1">
    <citation type="journal article" date="1981" name="Nature">
        <title>The structure of eight distinct cloned human leukocyte interferon cDNAs.</title>
        <authorList>
            <person name="Goeddel D.V."/>
            <person name="Leung D.W."/>
            <person name="Dull T.J."/>
            <person name="Gross M."/>
            <person name="Lawn R.M."/>
            <person name="McCandliss R."/>
            <person name="Seeburg P.H."/>
            <person name="Ullrich A."/>
            <person name="Yelverton E."/>
            <person name="Gray P.W."/>
        </authorList>
    </citation>
    <scope>NUCLEOTIDE SEQUENCE [MRNA]</scope>
</reference>
<reference key="2">
    <citation type="journal article" date="1981" name="Science">
        <title>DNA sequence of two closely linked human leukocyte interferon genes.</title>
        <authorList>
            <person name="Lawn R.M."/>
            <person name="Adelman J."/>
            <person name="Dull T.J."/>
            <person name="Gross M."/>
            <person name="Goeddel D.V."/>
            <person name="Ullrich A."/>
        </authorList>
    </citation>
    <scope>NUCLEOTIDE SEQUENCE [GENOMIC DNA]</scope>
</reference>
<reference key="3">
    <citation type="journal article" date="1985" name="J. Mol. Biol.">
        <title>Structural relationship of human interferon alpha genes and pseudogenes.</title>
        <authorList>
            <person name="Henco K."/>
            <person name="Brosius J."/>
            <person name="Fujisawa A."/>
            <person name="Fujisawa J."/>
            <person name="Haynes J.R."/>
            <person name="Hochstadt J."/>
            <person name="Kovacic T."/>
            <person name="Pasek M."/>
            <person name="Schamboeck A."/>
            <person name="Schmid J."/>
            <person name="Todokoro K."/>
            <person name="Waelchli M."/>
            <person name="Nagata S."/>
            <person name="Weissmann C."/>
        </authorList>
    </citation>
    <scope>NUCLEOTIDE SEQUENCE [GENOMIC DNA]</scope>
</reference>
<reference key="4">
    <citation type="journal article" date="2004" name="Nature">
        <title>DNA sequence and analysis of human chromosome 9.</title>
        <authorList>
            <person name="Humphray S.J."/>
            <person name="Oliver K."/>
            <person name="Hunt A.R."/>
            <person name="Plumb R.W."/>
            <person name="Loveland J.E."/>
            <person name="Howe K.L."/>
            <person name="Andrews T.D."/>
            <person name="Searle S."/>
            <person name="Hunt S.E."/>
            <person name="Scott C.E."/>
            <person name="Jones M.C."/>
            <person name="Ainscough R."/>
            <person name="Almeida J.P."/>
            <person name="Ambrose K.D."/>
            <person name="Ashwell R.I.S."/>
            <person name="Babbage A.K."/>
            <person name="Babbage S."/>
            <person name="Bagguley C.L."/>
            <person name="Bailey J."/>
            <person name="Banerjee R."/>
            <person name="Barker D.J."/>
            <person name="Barlow K.F."/>
            <person name="Bates K."/>
            <person name="Beasley H."/>
            <person name="Beasley O."/>
            <person name="Bird C.P."/>
            <person name="Bray-Allen S."/>
            <person name="Brown A.J."/>
            <person name="Brown J.Y."/>
            <person name="Burford D."/>
            <person name="Burrill W."/>
            <person name="Burton J."/>
            <person name="Carder C."/>
            <person name="Carter N.P."/>
            <person name="Chapman J.C."/>
            <person name="Chen Y."/>
            <person name="Clarke G."/>
            <person name="Clark S.Y."/>
            <person name="Clee C.M."/>
            <person name="Clegg S."/>
            <person name="Collier R.E."/>
            <person name="Corby N."/>
            <person name="Crosier M."/>
            <person name="Cummings A.T."/>
            <person name="Davies J."/>
            <person name="Dhami P."/>
            <person name="Dunn M."/>
            <person name="Dutta I."/>
            <person name="Dyer L.W."/>
            <person name="Earthrowl M.E."/>
            <person name="Faulkner L."/>
            <person name="Fleming C.J."/>
            <person name="Frankish A."/>
            <person name="Frankland J.A."/>
            <person name="French L."/>
            <person name="Fricker D.G."/>
            <person name="Garner P."/>
            <person name="Garnett J."/>
            <person name="Ghori J."/>
            <person name="Gilbert J.G.R."/>
            <person name="Glison C."/>
            <person name="Grafham D.V."/>
            <person name="Gribble S."/>
            <person name="Griffiths C."/>
            <person name="Griffiths-Jones S."/>
            <person name="Grocock R."/>
            <person name="Guy J."/>
            <person name="Hall R.E."/>
            <person name="Hammond S."/>
            <person name="Harley J.L."/>
            <person name="Harrison E.S.I."/>
            <person name="Hart E.A."/>
            <person name="Heath P.D."/>
            <person name="Henderson C.D."/>
            <person name="Hopkins B.L."/>
            <person name="Howard P.J."/>
            <person name="Howden P.J."/>
            <person name="Huckle E."/>
            <person name="Johnson C."/>
            <person name="Johnson D."/>
            <person name="Joy A.A."/>
            <person name="Kay M."/>
            <person name="Keenan S."/>
            <person name="Kershaw J.K."/>
            <person name="Kimberley A.M."/>
            <person name="King A."/>
            <person name="Knights A."/>
            <person name="Laird G.K."/>
            <person name="Langford C."/>
            <person name="Lawlor S."/>
            <person name="Leongamornlert D.A."/>
            <person name="Leversha M."/>
            <person name="Lloyd C."/>
            <person name="Lloyd D.M."/>
            <person name="Lovell J."/>
            <person name="Martin S."/>
            <person name="Mashreghi-Mohammadi M."/>
            <person name="Matthews L."/>
            <person name="McLaren S."/>
            <person name="McLay K.E."/>
            <person name="McMurray A."/>
            <person name="Milne S."/>
            <person name="Nickerson T."/>
            <person name="Nisbett J."/>
            <person name="Nordsiek G."/>
            <person name="Pearce A.V."/>
            <person name="Peck A.I."/>
            <person name="Porter K.M."/>
            <person name="Pandian R."/>
            <person name="Pelan S."/>
            <person name="Phillimore B."/>
            <person name="Povey S."/>
            <person name="Ramsey Y."/>
            <person name="Rand V."/>
            <person name="Scharfe M."/>
            <person name="Sehra H.K."/>
            <person name="Shownkeen R."/>
            <person name="Sims S.K."/>
            <person name="Skuce C.D."/>
            <person name="Smith M."/>
            <person name="Steward C.A."/>
            <person name="Swarbreck D."/>
            <person name="Sycamore N."/>
            <person name="Tester J."/>
            <person name="Thorpe A."/>
            <person name="Tracey A."/>
            <person name="Tromans A."/>
            <person name="Thomas D.W."/>
            <person name="Wall M."/>
            <person name="Wallis J.M."/>
            <person name="West A.P."/>
            <person name="Whitehead S.L."/>
            <person name="Willey D.L."/>
            <person name="Williams S.A."/>
            <person name="Wilming L."/>
            <person name="Wray P.W."/>
            <person name="Young L."/>
            <person name="Ashurst J.L."/>
            <person name="Coulson A."/>
            <person name="Blocker H."/>
            <person name="Durbin R.M."/>
            <person name="Sulston J.E."/>
            <person name="Hubbard T."/>
            <person name="Jackson M.J."/>
            <person name="Bentley D.R."/>
            <person name="Beck S."/>
            <person name="Rogers J."/>
            <person name="Dunham I."/>
        </authorList>
    </citation>
    <scope>NUCLEOTIDE SEQUENCE [LARGE SCALE GENOMIC DNA]</scope>
</reference>
<reference key="5">
    <citation type="submission" date="2005-07" db="EMBL/GenBank/DDBJ databases">
        <authorList>
            <person name="Mural R.J."/>
            <person name="Istrail S."/>
            <person name="Sutton G.G."/>
            <person name="Florea L."/>
            <person name="Halpern A.L."/>
            <person name="Mobarry C.M."/>
            <person name="Lippert R."/>
            <person name="Walenz B."/>
            <person name="Shatkay H."/>
            <person name="Dew I."/>
            <person name="Miller J.R."/>
            <person name="Flanigan M.J."/>
            <person name="Edwards N.J."/>
            <person name="Bolanos R."/>
            <person name="Fasulo D."/>
            <person name="Halldorsson B.V."/>
            <person name="Hannenhalli S."/>
            <person name="Turner R."/>
            <person name="Yooseph S."/>
            <person name="Lu F."/>
            <person name="Nusskern D.R."/>
            <person name="Shue B.C."/>
            <person name="Zheng X.H."/>
            <person name="Zhong F."/>
            <person name="Delcher A.L."/>
            <person name="Huson D.H."/>
            <person name="Kravitz S.A."/>
            <person name="Mouchard L."/>
            <person name="Reinert K."/>
            <person name="Remington K.A."/>
            <person name="Clark A.G."/>
            <person name="Waterman M.S."/>
            <person name="Eichler E.E."/>
            <person name="Adams M.D."/>
            <person name="Hunkapiller M.W."/>
            <person name="Myers E.W."/>
            <person name="Venter J.C."/>
        </authorList>
    </citation>
    <scope>NUCLEOTIDE SEQUENCE [LARGE SCALE GENOMIC DNA]</scope>
</reference>
<reference key="6">
    <citation type="journal article" date="2004" name="Genome Res.">
        <title>The status, quality, and expansion of the NIH full-length cDNA project: the Mammalian Gene Collection (MGC).</title>
        <authorList>
            <consortium name="The MGC Project Team"/>
        </authorList>
    </citation>
    <scope>NUCLEOTIDE SEQUENCE [LARGE SCALE MRNA]</scope>
</reference>
<reference key="7">
    <citation type="journal article" date="1992" name="J. Biol. Chem.">
        <title>Purification and characterization of multiple components of human lymphoblastoid interferon-alpha.</title>
        <authorList>
            <person name="Zoon K.C."/>
            <person name="Miller D."/>
            <person name="Bekisz J."/>
            <person name="zur Nedden D."/>
            <person name="Enterline J.C."/>
            <person name="Nguyen N.Y."/>
            <person name="Hu R.-Q."/>
        </authorList>
    </citation>
    <scope>PROTEIN SEQUENCE OF 24-55</scope>
    <scope>FUNCTION</scope>
</reference>
<reference key="8">
    <citation type="journal article" date="1998" name="Biochem. J.">
        <title>Identification of nine interferon-alpha subtypes produced by Sendai virus-induced human peripheral blood leucocytes.</title>
        <authorList>
            <person name="Nyman T.A."/>
            <person name="Toeloe H."/>
            <person name="Parkkinen J."/>
            <person name="Kalkkinen N."/>
        </authorList>
    </citation>
    <scope>PROTEIN SEQUENCE OF 24-53</scope>
    <scope>GLYCOSYLATION AT ASN-95</scope>
</reference>
<reference key="9">
    <citation type="journal article" date="1994" name="Biosci. Biotechnol. Biochem.">
        <title>Identification of glycosylated subtypes of interferon-alpha produced by human leukocytes.</title>
        <authorList>
            <person name="Shirono H."/>
            <person name="Koga J."/>
            <person name="Uemura H."/>
            <person name="Matsuo A."/>
        </authorList>
    </citation>
    <scope>PROTEIN SEQUENCE OF 24-43</scope>
</reference>
<reference key="10">
    <citation type="journal article" date="1996" name="J. Interferon Cytokine Res.">
        <title>Identification of interferon-alpha 7, -alpha 14, and -alpha 21 variants in the genome of a large human population.</title>
        <authorList>
            <person name="Hussain M."/>
            <person name="Gill D.S."/>
            <person name="Liao M.-J."/>
        </authorList>
    </citation>
    <scope>ABSENCE OF POLYMORPHISM</scope>
</reference>
<evidence type="ECO:0000250" key="1"/>
<evidence type="ECO:0000269" key="2">
    <source>
    </source>
</evidence>
<evidence type="ECO:0000269" key="3">
    <source>
    </source>
</evidence>
<evidence type="ECO:0000269" key="4">
    <source>
    </source>
</evidence>
<evidence type="ECO:0000305" key="5"/>
<feature type="signal peptide" evidence="2 3 4">
    <location>
        <begin position="1"/>
        <end position="23"/>
    </location>
</feature>
<feature type="chain" id="PRO_0000016367" description="Interferon alpha-14">
    <location>
        <begin position="24"/>
        <end position="189"/>
    </location>
</feature>
<feature type="glycosylation site" description="N-linked (GlcNAc...) asparagine" evidence="4">
    <location>
        <position position="95"/>
    </location>
</feature>
<feature type="disulfide bond" evidence="1">
    <location>
        <begin position="24"/>
        <end position="122"/>
    </location>
</feature>
<feature type="disulfide bond" evidence="1">
    <location>
        <begin position="52"/>
        <end position="162"/>
    </location>
</feature>
<feature type="sequence conflict" description="In Ref. 1; CAA23803." evidence="5" ref="1">
    <original>L</original>
    <variation>F</variation>
    <location>
        <position position="175"/>
    </location>
</feature>
<sequence length="189" mass="22063">MALPFALMMALVVLSCKSSCSLGCNLSQTHSLNNRRTLMLMAQMRRISPFSCLKDRHDFEFPQEEFDGNQFQKAQAISVLHEMMQQTFNLFSTKNSSAAWDETLLEKFYIELFQQMNDLEACVIQEVGVEETPLMNEDSILAVKKYFQRITLYLMEKKYSPCAWEVVRAEIMRSLSFSTNLQKRLRRKD</sequence>
<proteinExistence type="evidence at protein level"/>
<organism>
    <name type="scientific">Homo sapiens</name>
    <name type="common">Human</name>
    <dbReference type="NCBI Taxonomy" id="9606"/>
    <lineage>
        <taxon>Eukaryota</taxon>
        <taxon>Metazoa</taxon>
        <taxon>Chordata</taxon>
        <taxon>Craniata</taxon>
        <taxon>Vertebrata</taxon>
        <taxon>Euteleostomi</taxon>
        <taxon>Mammalia</taxon>
        <taxon>Eutheria</taxon>
        <taxon>Euarchontoglires</taxon>
        <taxon>Primates</taxon>
        <taxon>Haplorrhini</taxon>
        <taxon>Catarrhini</taxon>
        <taxon>Hominidae</taxon>
        <taxon>Homo</taxon>
    </lineage>
</organism>
<keyword id="KW-0051">Antiviral defense</keyword>
<keyword id="KW-0202">Cytokine</keyword>
<keyword id="KW-0903">Direct protein sequencing</keyword>
<keyword id="KW-1015">Disulfide bond</keyword>
<keyword id="KW-0325">Glycoprotein</keyword>
<keyword id="KW-1267">Proteomics identification</keyword>
<keyword id="KW-1185">Reference proteome</keyword>
<keyword id="KW-0964">Secreted</keyword>
<keyword id="KW-0732">Signal</keyword>
<dbReference type="EMBL" id="V00542">
    <property type="protein sequence ID" value="CAA23803.1"/>
    <property type="molecule type" value="mRNA"/>
</dbReference>
<dbReference type="EMBL" id="V00533">
    <property type="protein sequence ID" value="CAA23794.1"/>
    <property type="molecule type" value="Genomic_DNA"/>
</dbReference>
<dbReference type="EMBL" id="X02959">
    <property type="protein sequence ID" value="CAA26705.1"/>
    <property type="molecule type" value="Genomic_DNA"/>
</dbReference>
<dbReference type="EMBL" id="AL162420">
    <property type="status" value="NOT_ANNOTATED_CDS"/>
    <property type="molecule type" value="Genomic_DNA"/>
</dbReference>
<dbReference type="EMBL" id="CH471071">
    <property type="protein sequence ID" value="EAW58616.1"/>
    <property type="molecule type" value="Genomic_DNA"/>
</dbReference>
<dbReference type="EMBL" id="BC074956">
    <property type="protein sequence ID" value="AAH74956.1"/>
    <property type="molecule type" value="mRNA"/>
</dbReference>
<dbReference type="EMBL" id="BC104159">
    <property type="protein sequence ID" value="AAI04160.1"/>
    <property type="molecule type" value="mRNA"/>
</dbReference>
<dbReference type="EMBL" id="BC104160">
    <property type="protein sequence ID" value="AAI04161.1"/>
    <property type="molecule type" value="mRNA"/>
</dbReference>
<dbReference type="CCDS" id="CCDS6501.1"/>
<dbReference type="PIR" id="A42753">
    <property type="entry name" value="A42753"/>
</dbReference>
<dbReference type="PIR" id="A92916">
    <property type="entry name" value="IVHU14"/>
</dbReference>
<dbReference type="RefSeq" id="NP_002163.2">
    <property type="nucleotide sequence ID" value="NM_002172.3"/>
</dbReference>
<dbReference type="SMR" id="P01570"/>
<dbReference type="BioGRID" id="109671">
    <property type="interactions" value="16"/>
</dbReference>
<dbReference type="ComplexPortal" id="CPX-6003">
    <property type="entry name" value="Interferon alpha receptor-ligand complex, IFNA14 variant"/>
</dbReference>
<dbReference type="FunCoup" id="P01570">
    <property type="interactions" value="966"/>
</dbReference>
<dbReference type="IntAct" id="P01570">
    <property type="interactions" value="15"/>
</dbReference>
<dbReference type="STRING" id="9606.ENSP00000369571"/>
<dbReference type="ChEMBL" id="CHEMBL3856161"/>
<dbReference type="GlyConnect" id="288">
    <property type="glycosylation" value="2 N-Linked glycans"/>
</dbReference>
<dbReference type="GlyCosmos" id="P01570">
    <property type="glycosylation" value="1 site, 4 glycans"/>
</dbReference>
<dbReference type="GlyGen" id="P01570">
    <property type="glycosylation" value="2 sites, 4 N-linked glycans (2 sites)"/>
</dbReference>
<dbReference type="iPTMnet" id="P01570"/>
<dbReference type="PhosphoSitePlus" id="P01570"/>
<dbReference type="BioMuta" id="IFNA14"/>
<dbReference type="DMDM" id="20178265"/>
<dbReference type="REPRODUCTION-2DPAGE" id="P01570"/>
<dbReference type="MassIVE" id="P01570"/>
<dbReference type="PaxDb" id="9606-ENSP00000369571"/>
<dbReference type="PeptideAtlas" id="P01570"/>
<dbReference type="ABCD" id="P01570">
    <property type="antibodies" value="2 sequenced antibodies"/>
</dbReference>
<dbReference type="Antibodypedia" id="24865">
    <property type="antibodies" value="155 antibodies from 16 providers"/>
</dbReference>
<dbReference type="DNASU" id="3448"/>
<dbReference type="Ensembl" id="ENST00000380222.4">
    <property type="protein sequence ID" value="ENSP00000369571.2"/>
    <property type="gene ID" value="ENSG00000228083.3"/>
</dbReference>
<dbReference type="GeneID" id="3448"/>
<dbReference type="KEGG" id="hsa:3448"/>
<dbReference type="MANE-Select" id="ENST00000380222.4">
    <property type="protein sequence ID" value="ENSP00000369571.2"/>
    <property type="RefSeq nucleotide sequence ID" value="NM_002172.3"/>
    <property type="RefSeq protein sequence ID" value="NP_002163.2"/>
</dbReference>
<dbReference type="UCSC" id="uc010mis.4">
    <property type="organism name" value="human"/>
</dbReference>
<dbReference type="AGR" id="HGNC:5420"/>
<dbReference type="CTD" id="3448"/>
<dbReference type="DisGeNET" id="3448"/>
<dbReference type="GeneCards" id="IFNA14"/>
<dbReference type="HGNC" id="HGNC:5420">
    <property type="gene designation" value="IFNA14"/>
</dbReference>
<dbReference type="HPA" id="ENSG00000228083">
    <property type="expression patterns" value="Not detected"/>
</dbReference>
<dbReference type="MIM" id="147579">
    <property type="type" value="gene"/>
</dbReference>
<dbReference type="neXtProt" id="NX_P01570"/>
<dbReference type="OpenTargets" id="ENSG00000228083"/>
<dbReference type="PharmGKB" id="PA29659"/>
<dbReference type="VEuPathDB" id="HostDB:ENSG00000228083"/>
<dbReference type="eggNOG" id="ENOG502SQAC">
    <property type="taxonomic scope" value="Eukaryota"/>
</dbReference>
<dbReference type="GeneTree" id="ENSGT01000000214430"/>
<dbReference type="HOGENOM" id="CLU_109427_0_0_1"/>
<dbReference type="InParanoid" id="P01570"/>
<dbReference type="OMA" id="NNRRTLM"/>
<dbReference type="OrthoDB" id="9529410at2759"/>
<dbReference type="PAN-GO" id="P01570">
    <property type="GO annotations" value="12 GO annotations based on evolutionary models"/>
</dbReference>
<dbReference type="PhylomeDB" id="P01570"/>
<dbReference type="TreeFam" id="TF336177"/>
<dbReference type="PathwayCommons" id="P01570"/>
<dbReference type="Reactome" id="R-HSA-909733">
    <property type="pathway name" value="Interferon alpha/beta signaling"/>
</dbReference>
<dbReference type="Reactome" id="R-HSA-912694">
    <property type="pathway name" value="Regulation of IFNA/IFNB signaling"/>
</dbReference>
<dbReference type="Reactome" id="R-HSA-933541">
    <property type="pathway name" value="TRAF6 mediated IRF7 activation"/>
</dbReference>
<dbReference type="Reactome" id="R-HSA-9705671">
    <property type="pathway name" value="SARS-CoV-2 activates/modulates innate and adaptive immune responses"/>
</dbReference>
<dbReference type="Reactome" id="R-HSA-983231">
    <property type="pathway name" value="Factors involved in megakaryocyte development and platelet production"/>
</dbReference>
<dbReference type="Reactome" id="R-HSA-9833109">
    <property type="pathway name" value="Evasion by RSV of host interferon responses"/>
</dbReference>
<dbReference type="SignaLink" id="P01570"/>
<dbReference type="BioGRID-ORCS" id="3448">
    <property type="hits" value="9 hits in 1054 CRISPR screens"/>
</dbReference>
<dbReference type="GeneWiki" id="IFNA14"/>
<dbReference type="GenomeRNAi" id="3448"/>
<dbReference type="Pharos" id="P01570">
    <property type="development level" value="Tbio"/>
</dbReference>
<dbReference type="PRO" id="PR:P01570"/>
<dbReference type="Proteomes" id="UP000005640">
    <property type="component" value="Chromosome 9"/>
</dbReference>
<dbReference type="RNAct" id="P01570">
    <property type="molecule type" value="protein"/>
</dbReference>
<dbReference type="Bgee" id="ENSG00000228083">
    <property type="expression patterns" value="Expressed in metanephros cortex"/>
</dbReference>
<dbReference type="GO" id="GO:0005576">
    <property type="term" value="C:extracellular region"/>
    <property type="evidence" value="ECO:0000304"/>
    <property type="project" value="Reactome"/>
</dbReference>
<dbReference type="GO" id="GO:0005615">
    <property type="term" value="C:extracellular space"/>
    <property type="evidence" value="ECO:0000318"/>
    <property type="project" value="GO_Central"/>
</dbReference>
<dbReference type="GO" id="GO:0005125">
    <property type="term" value="F:cytokine activity"/>
    <property type="evidence" value="ECO:0000318"/>
    <property type="project" value="GO_Central"/>
</dbReference>
<dbReference type="GO" id="GO:0005126">
    <property type="term" value="F:cytokine receptor binding"/>
    <property type="evidence" value="ECO:0000304"/>
    <property type="project" value="ProtInc"/>
</dbReference>
<dbReference type="GO" id="GO:0005132">
    <property type="term" value="F:type I interferon receptor binding"/>
    <property type="evidence" value="ECO:0000318"/>
    <property type="project" value="GO_Central"/>
</dbReference>
<dbReference type="GO" id="GO:0002250">
    <property type="term" value="P:adaptive immune response"/>
    <property type="evidence" value="ECO:0000318"/>
    <property type="project" value="GO_Central"/>
</dbReference>
<dbReference type="GO" id="GO:0002312">
    <property type="term" value="P:B cell activation involved in immune response"/>
    <property type="evidence" value="ECO:0000318"/>
    <property type="project" value="GO_Central"/>
</dbReference>
<dbReference type="GO" id="GO:0098586">
    <property type="term" value="P:cellular response to virus"/>
    <property type="evidence" value="ECO:0000303"/>
    <property type="project" value="ComplexPortal"/>
</dbReference>
<dbReference type="GO" id="GO:0051607">
    <property type="term" value="P:defense response to virus"/>
    <property type="evidence" value="ECO:0007669"/>
    <property type="project" value="UniProtKB-KW"/>
</dbReference>
<dbReference type="GO" id="GO:0006959">
    <property type="term" value="P:humoral immune response"/>
    <property type="evidence" value="ECO:0000318"/>
    <property type="project" value="GO_Central"/>
</dbReference>
<dbReference type="GO" id="GO:0002323">
    <property type="term" value="P:natural killer cell activation involved in immune response"/>
    <property type="evidence" value="ECO:0000318"/>
    <property type="project" value="GO_Central"/>
</dbReference>
<dbReference type="GO" id="GO:0043330">
    <property type="term" value="P:response to exogenous dsRNA"/>
    <property type="evidence" value="ECO:0000318"/>
    <property type="project" value="GO_Central"/>
</dbReference>
<dbReference type="GO" id="GO:0002286">
    <property type="term" value="P:T cell activation involved in immune response"/>
    <property type="evidence" value="ECO:0000318"/>
    <property type="project" value="GO_Central"/>
</dbReference>
<dbReference type="GO" id="GO:0060337">
    <property type="term" value="P:type I interferon-mediated signaling pathway"/>
    <property type="evidence" value="ECO:0000318"/>
    <property type="project" value="GO_Central"/>
</dbReference>
<dbReference type="CDD" id="cd00095">
    <property type="entry name" value="IFab"/>
    <property type="match status" value="1"/>
</dbReference>
<dbReference type="FunFam" id="1.20.1250.10:FF:000001">
    <property type="entry name" value="Interferon alpha"/>
    <property type="match status" value="1"/>
</dbReference>
<dbReference type="Gene3D" id="1.20.1250.10">
    <property type="match status" value="1"/>
</dbReference>
<dbReference type="InterPro" id="IPR009079">
    <property type="entry name" value="4_helix_cytokine-like_core"/>
</dbReference>
<dbReference type="InterPro" id="IPR000471">
    <property type="entry name" value="Interferon_alpha/beta/delta"/>
</dbReference>
<dbReference type="PANTHER" id="PTHR11691:SF67">
    <property type="entry name" value="INTERFERON ALPHA-14"/>
    <property type="match status" value="1"/>
</dbReference>
<dbReference type="PANTHER" id="PTHR11691">
    <property type="entry name" value="TYPE I INTERFERON"/>
    <property type="match status" value="1"/>
</dbReference>
<dbReference type="Pfam" id="PF00143">
    <property type="entry name" value="Interferon"/>
    <property type="match status" value="1"/>
</dbReference>
<dbReference type="PRINTS" id="PR00266">
    <property type="entry name" value="INTERFERONAB"/>
</dbReference>
<dbReference type="SMART" id="SM00076">
    <property type="entry name" value="IFabd"/>
    <property type="match status" value="1"/>
</dbReference>
<dbReference type="SUPFAM" id="SSF47266">
    <property type="entry name" value="4-helical cytokines"/>
    <property type="match status" value="1"/>
</dbReference>
<dbReference type="PROSITE" id="PS00252">
    <property type="entry name" value="INTERFERON_A_B_D"/>
    <property type="match status" value="1"/>
</dbReference>
<gene>
    <name type="primary">IFNA14</name>
</gene>